<sequence length="270" mass="31023">MAKVPDLFEDLKNCYSENEDYSSAIDHLSLNQKSFYDASYGSLHETCTDQFVSLRTSETSKMSNFTFKESRVTVSATSSNGKILKKRRLSFSETFTEDDLQSITHDLEETIQPRSAPYTYQSDLRYKLMKLVRQKFVMNDSLNQTIYQDVDKHYLSTTWLNDLQQEVKFDMYAYSSGGDDSKYPVTLKISDSQLFVSAQGEDQPVLLKELPETPKLITGSETDLIFFWKSINSKNYFTSAAYPELFIATKEQSRVHLARGLPSMTDFQIS</sequence>
<dbReference type="EMBL" id="X01450">
    <property type="protein sequence ID" value="CAA25682.1"/>
    <property type="molecule type" value="mRNA"/>
</dbReference>
<dbReference type="EMBL" id="AF010237">
    <property type="protein sequence ID" value="AAC28999.1"/>
    <property type="molecule type" value="Genomic_DNA"/>
</dbReference>
<dbReference type="EMBL" id="BC003727">
    <property type="protein sequence ID" value="AAH03727.1"/>
    <property type="molecule type" value="mRNA"/>
</dbReference>
<dbReference type="CCDS" id="CCDS16725.1"/>
<dbReference type="PIR" id="A01846">
    <property type="entry name" value="ICMS1"/>
</dbReference>
<dbReference type="RefSeq" id="NP_034684.2">
    <property type="nucleotide sequence ID" value="NM_010554.4"/>
</dbReference>
<dbReference type="RefSeq" id="XP_006498856.1">
    <property type="nucleotide sequence ID" value="XM_006498793.3"/>
</dbReference>
<dbReference type="SMR" id="P01582"/>
<dbReference type="BioGRID" id="200623">
    <property type="interactions" value="1"/>
</dbReference>
<dbReference type="CORUM" id="P01582"/>
<dbReference type="FunCoup" id="P01582">
    <property type="interactions" value="662"/>
</dbReference>
<dbReference type="STRING" id="10090.ENSMUSP00000028882"/>
<dbReference type="GlyCosmos" id="P01582">
    <property type="glycosylation" value="3 sites, No reported glycans"/>
</dbReference>
<dbReference type="GlyGen" id="P01582">
    <property type="glycosylation" value="3 sites"/>
</dbReference>
<dbReference type="iPTMnet" id="P01582"/>
<dbReference type="PhosphoSitePlus" id="P01582"/>
<dbReference type="PaxDb" id="10090-ENSMUSP00000028882"/>
<dbReference type="ProteomicsDB" id="269391"/>
<dbReference type="Antibodypedia" id="3842">
    <property type="antibodies" value="1589 antibodies from 50 providers"/>
</dbReference>
<dbReference type="DNASU" id="16175"/>
<dbReference type="Ensembl" id="ENSMUST00000028882.2">
    <property type="protein sequence ID" value="ENSMUSP00000028882.2"/>
    <property type="gene ID" value="ENSMUSG00000027399.2"/>
</dbReference>
<dbReference type="GeneID" id="16175"/>
<dbReference type="KEGG" id="mmu:16175"/>
<dbReference type="UCSC" id="uc008mhr.1">
    <property type="organism name" value="mouse"/>
</dbReference>
<dbReference type="AGR" id="MGI:96542"/>
<dbReference type="CTD" id="3552"/>
<dbReference type="MGI" id="MGI:96542">
    <property type="gene designation" value="Il1a"/>
</dbReference>
<dbReference type="VEuPathDB" id="HostDB:ENSMUSG00000027399"/>
<dbReference type="eggNOG" id="ENOG502T3DD">
    <property type="taxonomic scope" value="Eukaryota"/>
</dbReference>
<dbReference type="GeneTree" id="ENSGT00390000013353"/>
<dbReference type="HOGENOM" id="CLU_090014_0_0_1"/>
<dbReference type="InParanoid" id="P01582"/>
<dbReference type="OMA" id="SNMKYNF"/>
<dbReference type="OrthoDB" id="9451248at2759"/>
<dbReference type="PhylomeDB" id="P01582"/>
<dbReference type="TreeFam" id="TF300203"/>
<dbReference type="Reactome" id="R-MMU-448706">
    <property type="pathway name" value="Interleukin-1 processing"/>
</dbReference>
<dbReference type="Reactome" id="R-MMU-5620971">
    <property type="pathway name" value="Pyroptosis"/>
</dbReference>
<dbReference type="Reactome" id="R-MMU-9020702">
    <property type="pathway name" value="Interleukin-1 signaling"/>
</dbReference>
<dbReference type="BioGRID-ORCS" id="16175">
    <property type="hits" value="0 hits in 78 CRISPR screens"/>
</dbReference>
<dbReference type="PRO" id="PR:P01582"/>
<dbReference type="Proteomes" id="UP000000589">
    <property type="component" value="Chromosome 2"/>
</dbReference>
<dbReference type="RNAct" id="P01582">
    <property type="molecule type" value="protein"/>
</dbReference>
<dbReference type="Bgee" id="ENSMUSG00000027399">
    <property type="expression patterns" value="Expressed in esophagus and 30 other cell types or tissues"/>
</dbReference>
<dbReference type="ExpressionAtlas" id="P01582">
    <property type="expression patterns" value="baseline and differential"/>
</dbReference>
<dbReference type="GO" id="GO:0005737">
    <property type="term" value="C:cytoplasm"/>
    <property type="evidence" value="ECO:0000314"/>
    <property type="project" value="MGI"/>
</dbReference>
<dbReference type="GO" id="GO:0005829">
    <property type="term" value="C:cytosol"/>
    <property type="evidence" value="ECO:0000250"/>
    <property type="project" value="UniProtKB"/>
</dbReference>
<dbReference type="GO" id="GO:0005615">
    <property type="term" value="C:extracellular space"/>
    <property type="evidence" value="ECO:0000314"/>
    <property type="project" value="MGI"/>
</dbReference>
<dbReference type="GO" id="GO:0005634">
    <property type="term" value="C:nucleus"/>
    <property type="evidence" value="ECO:0007669"/>
    <property type="project" value="UniProtKB-SubCell"/>
</dbReference>
<dbReference type="GO" id="GO:0005507">
    <property type="term" value="F:copper ion binding"/>
    <property type="evidence" value="ECO:0000250"/>
    <property type="project" value="UniProtKB"/>
</dbReference>
<dbReference type="GO" id="GO:0005125">
    <property type="term" value="F:cytokine activity"/>
    <property type="evidence" value="ECO:0000314"/>
    <property type="project" value="MGI"/>
</dbReference>
<dbReference type="GO" id="GO:0005149">
    <property type="term" value="F:interleukin-1 receptor binding"/>
    <property type="evidence" value="ECO:0000353"/>
    <property type="project" value="MGI"/>
</dbReference>
<dbReference type="GO" id="GO:0034605">
    <property type="term" value="P:cellular response to heat"/>
    <property type="evidence" value="ECO:0000250"/>
    <property type="project" value="UniProtKB"/>
</dbReference>
<dbReference type="GO" id="GO:0002248">
    <property type="term" value="P:connective tissue replacement involved in inflammatory response wound healing"/>
    <property type="evidence" value="ECO:0000315"/>
    <property type="project" value="MGI"/>
</dbReference>
<dbReference type="GO" id="GO:0019221">
    <property type="term" value="P:cytokine-mediated signaling pathway"/>
    <property type="evidence" value="ECO:0007669"/>
    <property type="project" value="Ensembl"/>
</dbReference>
<dbReference type="GO" id="GO:0035234">
    <property type="term" value="P:ectopic germ cell programmed cell death"/>
    <property type="evidence" value="ECO:0000316"/>
    <property type="project" value="MGI"/>
</dbReference>
<dbReference type="GO" id="GO:0097192">
    <property type="term" value="P:extrinsic apoptotic signaling pathway in absence of ligand"/>
    <property type="evidence" value="ECO:0000315"/>
    <property type="project" value="MGI"/>
</dbReference>
<dbReference type="GO" id="GO:0001660">
    <property type="term" value="P:fever generation"/>
    <property type="evidence" value="ECO:0007669"/>
    <property type="project" value="UniProtKB-KW"/>
</dbReference>
<dbReference type="GO" id="GO:0006955">
    <property type="term" value="P:immune response"/>
    <property type="evidence" value="ECO:0007669"/>
    <property type="project" value="InterPro"/>
</dbReference>
<dbReference type="GO" id="GO:0006954">
    <property type="term" value="P:inflammatory response"/>
    <property type="evidence" value="ECO:0000314"/>
    <property type="project" value="MGI"/>
</dbReference>
<dbReference type="GO" id="GO:0070498">
    <property type="term" value="P:interleukin-1-mediated signaling pathway"/>
    <property type="evidence" value="ECO:0000314"/>
    <property type="project" value="MGI"/>
</dbReference>
<dbReference type="GO" id="GO:0006883">
    <property type="term" value="P:intracellular sodium ion homeostasis"/>
    <property type="evidence" value="ECO:0000314"/>
    <property type="project" value="MGI"/>
</dbReference>
<dbReference type="GO" id="GO:0008285">
    <property type="term" value="P:negative regulation of cell population proliferation"/>
    <property type="evidence" value="ECO:0007669"/>
    <property type="project" value="Ensembl"/>
</dbReference>
<dbReference type="GO" id="GO:0045766">
    <property type="term" value="P:positive regulation of angiogenesis"/>
    <property type="evidence" value="ECO:0000315"/>
    <property type="project" value="BHF-UCL"/>
</dbReference>
<dbReference type="GO" id="GO:0051781">
    <property type="term" value="P:positive regulation of cell division"/>
    <property type="evidence" value="ECO:0007669"/>
    <property type="project" value="UniProtKB-KW"/>
</dbReference>
<dbReference type="GO" id="GO:0032743">
    <property type="term" value="P:positive regulation of interleukin-2 production"/>
    <property type="evidence" value="ECO:0000314"/>
    <property type="project" value="MGI"/>
</dbReference>
<dbReference type="GO" id="GO:0032755">
    <property type="term" value="P:positive regulation of interleukin-6 production"/>
    <property type="evidence" value="ECO:0000314"/>
    <property type="project" value="MGI"/>
</dbReference>
<dbReference type="GO" id="GO:0045840">
    <property type="term" value="P:positive regulation of mitotic nuclear division"/>
    <property type="evidence" value="ECO:0007669"/>
    <property type="project" value="Ensembl"/>
</dbReference>
<dbReference type="GO" id="GO:0071639">
    <property type="term" value="P:positive regulation of monocyte chemotactic protein-1 production"/>
    <property type="evidence" value="ECO:0000314"/>
    <property type="project" value="MGI"/>
</dbReference>
<dbReference type="GO" id="GO:2000391">
    <property type="term" value="P:positive regulation of neutrophil extravasation"/>
    <property type="evidence" value="ECO:0000314"/>
    <property type="project" value="MGI"/>
</dbReference>
<dbReference type="GO" id="GO:0050714">
    <property type="term" value="P:positive regulation of protein secretion"/>
    <property type="evidence" value="ECO:0007669"/>
    <property type="project" value="Ensembl"/>
</dbReference>
<dbReference type="GO" id="GO:0045944">
    <property type="term" value="P:positive regulation of transcription by RNA polymerase II"/>
    <property type="evidence" value="ECO:0000316"/>
    <property type="project" value="MGI"/>
</dbReference>
<dbReference type="GO" id="GO:0010575">
    <property type="term" value="P:positive regulation of vascular endothelial growth factor production"/>
    <property type="evidence" value="ECO:0000315"/>
    <property type="project" value="BHF-UCL"/>
</dbReference>
<dbReference type="GO" id="GO:0046688">
    <property type="term" value="P:response to copper ion"/>
    <property type="evidence" value="ECO:0000250"/>
    <property type="project" value="UniProtKB"/>
</dbReference>
<dbReference type="CDD" id="cd23295">
    <property type="entry name" value="beta-trefoil_IL1A"/>
    <property type="match status" value="1"/>
</dbReference>
<dbReference type="FunFam" id="2.80.10.50:FF:000049">
    <property type="entry name" value="Interleukin-1 alpha"/>
    <property type="match status" value="1"/>
</dbReference>
<dbReference type="Gene3D" id="2.80.10.50">
    <property type="match status" value="1"/>
</dbReference>
<dbReference type="InterPro" id="IPR003295">
    <property type="entry name" value="IL-1_alpha"/>
</dbReference>
<dbReference type="InterPro" id="IPR020877">
    <property type="entry name" value="IL-1_CS"/>
</dbReference>
<dbReference type="InterPro" id="IPR000975">
    <property type="entry name" value="IL-1_fam"/>
</dbReference>
<dbReference type="InterPro" id="IPR003502">
    <property type="entry name" value="IL-1_propep"/>
</dbReference>
<dbReference type="InterPro" id="IPR008996">
    <property type="entry name" value="IL1/FGF"/>
</dbReference>
<dbReference type="PANTHER" id="PTHR10078:SF33">
    <property type="entry name" value="INTERLEUKIN-1 ALPHA"/>
    <property type="match status" value="1"/>
</dbReference>
<dbReference type="PANTHER" id="PTHR10078">
    <property type="entry name" value="INTERLEUKIN-1 FAMILY MEMBER"/>
    <property type="match status" value="1"/>
</dbReference>
<dbReference type="Pfam" id="PF00340">
    <property type="entry name" value="IL1"/>
    <property type="match status" value="1"/>
</dbReference>
<dbReference type="Pfam" id="PF02394">
    <property type="entry name" value="IL1_propep"/>
    <property type="match status" value="1"/>
</dbReference>
<dbReference type="PRINTS" id="PR00264">
    <property type="entry name" value="INTERLEUKIN1"/>
</dbReference>
<dbReference type="PRINTS" id="PR01358">
    <property type="entry name" value="INTRLEUKIN1A"/>
</dbReference>
<dbReference type="PRINTS" id="PR01357">
    <property type="entry name" value="INTRLEUKN1AB"/>
</dbReference>
<dbReference type="SMART" id="SM00125">
    <property type="entry name" value="IL1"/>
    <property type="match status" value="1"/>
</dbReference>
<dbReference type="SUPFAM" id="SSF50353">
    <property type="entry name" value="Cytokine"/>
    <property type="match status" value="1"/>
</dbReference>
<dbReference type="PROSITE" id="PS00253">
    <property type="entry name" value="INTERLEUKIN_1"/>
    <property type="match status" value="1"/>
</dbReference>
<keyword id="KW-0007">Acetylation</keyword>
<keyword id="KW-0202">Cytokine</keyword>
<keyword id="KW-0963">Cytoplasm</keyword>
<keyword id="KW-0325">Glycoprotein</keyword>
<keyword id="KW-0395">Inflammatory response</keyword>
<keyword id="KW-0497">Mitogen</keyword>
<keyword id="KW-0539">Nucleus</keyword>
<keyword id="KW-0597">Phosphoprotein</keyword>
<keyword id="KW-0666">Pyrogen</keyword>
<keyword id="KW-1185">Reference proteome</keyword>
<keyword id="KW-0964">Secreted</keyword>
<reference key="1">
    <citation type="journal article" date="1984" name="Nature">
        <title>Cloning and expression of murine interleukin-1 cDNA in Escherichia coli.</title>
        <authorList>
            <person name="Lomedico P.T."/>
            <person name="Gubler U."/>
            <person name="Hellmann C.P."/>
            <person name="Dukovich M."/>
            <person name="Giri J.G."/>
            <person name="Pan Y.-C.E."/>
            <person name="Collier K."/>
            <person name="Semionow R."/>
            <person name="Chua A.O."/>
            <person name="Mizel S.B."/>
        </authorList>
    </citation>
    <scope>NUCLEOTIDE SEQUENCE [MRNA]</scope>
</reference>
<reference key="2">
    <citation type="submission" date="1997-06" db="EMBL/GenBank/DDBJ databases">
        <title>Complete nucleotide sequence of the murine interleukin-1 alpha gene.</title>
        <authorList>
            <person name="Kastelic T."/>
            <person name="Wanner A."/>
            <person name="Mackenzie A."/>
            <person name="Cheneval D."/>
        </authorList>
    </citation>
    <scope>NUCLEOTIDE SEQUENCE [GENOMIC DNA]</scope>
    <source>
        <strain>BALB/cJ</strain>
    </source>
</reference>
<reference key="3">
    <citation type="journal article" date="2004" name="Genome Res.">
        <title>The status, quality, and expansion of the NIH full-length cDNA project: the Mammalian Gene Collection (MGC).</title>
        <authorList>
            <consortium name="The MGC Project Team"/>
        </authorList>
    </citation>
    <scope>NUCLEOTIDE SEQUENCE [LARGE SCALE MRNA]</scope>
    <source>
        <strain>FVB/N</strain>
        <tissue>Mammary gland</tissue>
    </source>
</reference>
<reference key="4">
    <citation type="journal article" date="1988" name="J. Biol. Chem.">
        <title>The precursor of interleukin-1 alpha is phosphorylated at residue serine 90.</title>
        <authorList>
            <person name="Beuscher H.U."/>
            <person name="Nickells M.W."/>
            <person name="Colten H.R."/>
        </authorList>
    </citation>
    <scope>PHOSPHORYLATION AT SER-90</scope>
</reference>
<reference key="5">
    <citation type="journal article" date="1992" name="J. Biol. Chem.">
        <title>Interleukin 1 induces NF-kappa B through its type I but not its type II receptor in lymphocytes.</title>
        <authorList>
            <person name="Stylianou E."/>
            <person name="O'Neill L.A."/>
            <person name="Rawlinson L."/>
            <person name="Edbrooke M.R."/>
            <person name="Woo P."/>
            <person name="Saklatvala J."/>
        </authorList>
    </citation>
    <scope>FUNCTION</scope>
</reference>
<reference key="6">
    <citation type="journal article" date="2006" name="Behav. Brain Res.">
        <title>Interleukin-1alphabeta gene-deficient mice show reduced nociceptive sensitivity in models of inflammatory and neuropathic pain but not post-operative pain.</title>
        <authorList>
            <person name="Honore P."/>
            <person name="Wade C.L."/>
            <person name="Zhong C."/>
            <person name="Harris R.R."/>
            <person name="Wu C."/>
            <person name="Ghayur T."/>
            <person name="Iwakura Y."/>
            <person name="Decker M.W."/>
            <person name="Faltynek C."/>
            <person name="Sullivan J."/>
            <person name="Jarvis M.F."/>
        </authorList>
    </citation>
    <scope>FUNCTION</scope>
    <scope>DISRUPTION PHENOTYPE</scope>
</reference>
<organism>
    <name type="scientific">Mus musculus</name>
    <name type="common">Mouse</name>
    <dbReference type="NCBI Taxonomy" id="10090"/>
    <lineage>
        <taxon>Eukaryota</taxon>
        <taxon>Metazoa</taxon>
        <taxon>Chordata</taxon>
        <taxon>Craniata</taxon>
        <taxon>Vertebrata</taxon>
        <taxon>Euteleostomi</taxon>
        <taxon>Mammalia</taxon>
        <taxon>Eutheria</taxon>
        <taxon>Euarchontoglires</taxon>
        <taxon>Glires</taxon>
        <taxon>Rodentia</taxon>
        <taxon>Myomorpha</taxon>
        <taxon>Muroidea</taxon>
        <taxon>Muridae</taxon>
        <taxon>Murinae</taxon>
        <taxon>Mus</taxon>
        <taxon>Mus</taxon>
    </lineage>
</organism>
<accession>P01582</accession>
<evidence type="ECO:0000250" key="1">
    <source>
        <dbReference type="UniProtKB" id="P01583"/>
    </source>
</evidence>
<evidence type="ECO:0000255" key="2"/>
<evidence type="ECO:0000269" key="3">
    <source>
    </source>
</evidence>
<evidence type="ECO:0000269" key="4">
    <source>
    </source>
</evidence>
<evidence type="ECO:0000269" key="5">
    <source>
    </source>
</evidence>
<evidence type="ECO:0000305" key="6"/>
<evidence type="ECO:0000312" key="7">
    <source>
        <dbReference type="MGI" id="MGI:96542"/>
    </source>
</evidence>
<comment type="function">
    <text evidence="1 3 4">Cytokine constitutively present intracellularly in nearly all resting non-hematopoietic cells that plays an important role in inflammation and bridges the innate and adaptive immune systems (PubMed:16256210). After binding to its receptor IL1R1 together with its accessory protein IL1RAP, forms the high affinity interleukin-1 receptor complex. Signaling involves the recruitment of adapter molecules such as MYD88, IRAK1 or IRAK4. In turn, mediates the activation of NF-kappa-B and the three MAPK pathways p38, p42/p44 and JNK pathways (PubMed:1386364). Within the cell, acts as an alarmin and cell death results in its liberation in the extracellular space after disruption of the cell membrane to induce inflammation and alert the host to injury or damage. In addition to its role as a danger signal, which occurs when the cytokine is passively released by cell necrosis, directly senses DNA damage and acts as a signal for genotoxic stress without loss of cell integrity (By similarity).</text>
</comment>
<comment type="subunit">
    <text evidence="1">Monomer. Interacts with TMED10; the interaction mediates the translocation from the cytoplasm into the ERGIC (endoplasmic reticulum-Golgi intermediate compartment) and thereby secretion. Interacts with IL1R1. Interacts with S100A13; this interaction is the first step in the export of IL1A, followed by direct translocation of this complex across the plasma membrane.</text>
</comment>
<comment type="subcellular location">
    <subcellularLocation>
        <location evidence="1">Nucleus</location>
    </subcellularLocation>
    <subcellularLocation>
        <location evidence="1">Cytoplasm</location>
    </subcellularLocation>
    <subcellularLocation>
        <location evidence="1">Secreted</location>
    </subcellularLocation>
    <text evidence="1">The lack of a specific hydrophobic segment in the precursor sequence suggests that IL-1 is released by damaged cells or is secreted by a mechanism differing from that used for other secretory proteins. The secretion is dependent on protein unfolding and facilitated by the cargo receptor TMED10; it results in protein translocation from the cytoplasm into the ERGIC (endoplasmic reticulum-Golgi intermediate compartment) followed by vesicle entry and secretion. Recruited to DNA damage sites and secreted after genotoxic stress.</text>
</comment>
<comment type="domain">
    <text>The similarity among the IL-1 precursors suggests that the amino ends of these proteins serve some as yet undefined function.</text>
</comment>
<comment type="PTM">
    <text evidence="1">Acetylated within its nuclear localization sequence, which impacts subcellular localization.</text>
</comment>
<comment type="PTM">
    <text evidence="1">Proteolytic processed by CAPN1 in a calcium-dependent manner. Cleavage from 31 kDa precursor to 18 kDa biologically active molecules.</text>
</comment>
<comment type="PTM">
    <text evidence="1">Phosphorylated. Phosphorylation greatly enhances susceptibility to digestion and promotes the conversion of pre-IL1A alpha to the biologically active IL1A.</text>
</comment>
<comment type="disruption phenotype">
    <text evidence="4">Deletion mice show reduced nociceptive sensitivity compared to control mice in models of inflammatory and nerve injury-induced pain when associated with IL1B deletion.</text>
</comment>
<comment type="similarity">
    <text evidence="6">Belongs to the IL-1 family.</text>
</comment>
<proteinExistence type="evidence at protein level"/>
<gene>
    <name evidence="7" type="primary">Il1a</name>
</gene>
<name>IL1A_MOUSE</name>
<feature type="propeptide" id="PRO_0000015273">
    <location>
        <begin position="1"/>
        <end position="114"/>
    </location>
</feature>
<feature type="chain" id="PRO_0000015274" description="Interleukin-1 alpha">
    <location>
        <begin position="115"/>
        <end position="270"/>
    </location>
</feature>
<feature type="region of interest" description="Nuclear localization signal (NLS)" evidence="1">
    <location>
        <begin position="85"/>
        <end position="89"/>
    </location>
</feature>
<feature type="modified residue" description="N6-acetyllysine" evidence="1">
    <location>
        <position position="85"/>
    </location>
</feature>
<feature type="modified residue" description="Phosphoserine" evidence="5">
    <location>
        <position position="90"/>
    </location>
</feature>
<feature type="glycosylation site" description="N-linked (GlcNAc...) asparagine" evidence="2">
    <location>
        <position position="64"/>
    </location>
</feature>
<feature type="glycosylation site" description="N-linked (GlcNAc...) asparagine" evidence="2">
    <location>
        <position position="139"/>
    </location>
</feature>
<feature type="glycosylation site" description="N-linked (GlcNAc...) asparagine" evidence="2">
    <location>
        <position position="143"/>
    </location>
</feature>
<protein>
    <recommendedName>
        <fullName>Interleukin-1 alpha</fullName>
        <shortName>IL-1 alpha</shortName>
    </recommendedName>
</protein>